<dbReference type="EC" id="2.6.1.52" evidence="1"/>
<dbReference type="EMBL" id="CP000050">
    <property type="protein sequence ID" value="AAY49694.1"/>
    <property type="molecule type" value="Genomic_DNA"/>
</dbReference>
<dbReference type="RefSeq" id="WP_011036771.1">
    <property type="nucleotide sequence ID" value="NZ_CP155948.1"/>
</dbReference>
<dbReference type="SMR" id="Q4UTC9"/>
<dbReference type="KEGG" id="xcb:XC_2645"/>
<dbReference type="HOGENOM" id="CLU_034866_0_2_6"/>
<dbReference type="UniPathway" id="UPA00135">
    <property type="reaction ID" value="UER00197"/>
</dbReference>
<dbReference type="UniPathway" id="UPA00244">
    <property type="reaction ID" value="UER00311"/>
</dbReference>
<dbReference type="Proteomes" id="UP000000420">
    <property type="component" value="Chromosome"/>
</dbReference>
<dbReference type="GO" id="GO:0005737">
    <property type="term" value="C:cytoplasm"/>
    <property type="evidence" value="ECO:0007669"/>
    <property type="project" value="UniProtKB-SubCell"/>
</dbReference>
<dbReference type="GO" id="GO:0004648">
    <property type="term" value="F:O-phospho-L-serine:2-oxoglutarate aminotransferase activity"/>
    <property type="evidence" value="ECO:0007669"/>
    <property type="project" value="UniProtKB-UniRule"/>
</dbReference>
<dbReference type="GO" id="GO:0030170">
    <property type="term" value="F:pyridoxal phosphate binding"/>
    <property type="evidence" value="ECO:0007669"/>
    <property type="project" value="UniProtKB-UniRule"/>
</dbReference>
<dbReference type="GO" id="GO:0006564">
    <property type="term" value="P:L-serine biosynthetic process"/>
    <property type="evidence" value="ECO:0007669"/>
    <property type="project" value="UniProtKB-UniRule"/>
</dbReference>
<dbReference type="GO" id="GO:0008615">
    <property type="term" value="P:pyridoxine biosynthetic process"/>
    <property type="evidence" value="ECO:0007669"/>
    <property type="project" value="UniProtKB-UniRule"/>
</dbReference>
<dbReference type="FunFam" id="3.40.640.10:FF:000010">
    <property type="entry name" value="Phosphoserine aminotransferase"/>
    <property type="match status" value="1"/>
</dbReference>
<dbReference type="FunFam" id="3.90.1150.10:FF:000006">
    <property type="entry name" value="Phosphoserine aminotransferase"/>
    <property type="match status" value="1"/>
</dbReference>
<dbReference type="Gene3D" id="3.90.1150.10">
    <property type="entry name" value="Aspartate Aminotransferase, domain 1"/>
    <property type="match status" value="1"/>
</dbReference>
<dbReference type="Gene3D" id="3.40.640.10">
    <property type="entry name" value="Type I PLP-dependent aspartate aminotransferase-like (Major domain)"/>
    <property type="match status" value="1"/>
</dbReference>
<dbReference type="HAMAP" id="MF_00160">
    <property type="entry name" value="SerC_aminotrans_5"/>
    <property type="match status" value="1"/>
</dbReference>
<dbReference type="InterPro" id="IPR000192">
    <property type="entry name" value="Aminotrans_V_dom"/>
</dbReference>
<dbReference type="InterPro" id="IPR020578">
    <property type="entry name" value="Aminotrans_V_PyrdxlP_BS"/>
</dbReference>
<dbReference type="InterPro" id="IPR022278">
    <property type="entry name" value="Pser_aminoTfrase"/>
</dbReference>
<dbReference type="InterPro" id="IPR015424">
    <property type="entry name" value="PyrdxlP-dep_Trfase"/>
</dbReference>
<dbReference type="InterPro" id="IPR015421">
    <property type="entry name" value="PyrdxlP-dep_Trfase_major"/>
</dbReference>
<dbReference type="InterPro" id="IPR015422">
    <property type="entry name" value="PyrdxlP-dep_Trfase_small"/>
</dbReference>
<dbReference type="NCBIfam" id="NF003764">
    <property type="entry name" value="PRK05355.1"/>
    <property type="match status" value="1"/>
</dbReference>
<dbReference type="NCBIfam" id="TIGR01364">
    <property type="entry name" value="serC_1"/>
    <property type="match status" value="1"/>
</dbReference>
<dbReference type="PANTHER" id="PTHR43247">
    <property type="entry name" value="PHOSPHOSERINE AMINOTRANSFERASE"/>
    <property type="match status" value="1"/>
</dbReference>
<dbReference type="PANTHER" id="PTHR43247:SF1">
    <property type="entry name" value="PHOSPHOSERINE AMINOTRANSFERASE"/>
    <property type="match status" value="1"/>
</dbReference>
<dbReference type="Pfam" id="PF00266">
    <property type="entry name" value="Aminotran_5"/>
    <property type="match status" value="1"/>
</dbReference>
<dbReference type="PIRSF" id="PIRSF000525">
    <property type="entry name" value="SerC"/>
    <property type="match status" value="1"/>
</dbReference>
<dbReference type="SUPFAM" id="SSF53383">
    <property type="entry name" value="PLP-dependent transferases"/>
    <property type="match status" value="1"/>
</dbReference>
<dbReference type="PROSITE" id="PS00595">
    <property type="entry name" value="AA_TRANSFER_CLASS_5"/>
    <property type="match status" value="1"/>
</dbReference>
<keyword id="KW-0028">Amino-acid biosynthesis</keyword>
<keyword id="KW-0032">Aminotransferase</keyword>
<keyword id="KW-0963">Cytoplasm</keyword>
<keyword id="KW-0663">Pyridoxal phosphate</keyword>
<keyword id="KW-0664">Pyridoxine biosynthesis</keyword>
<keyword id="KW-0718">Serine biosynthesis</keyword>
<keyword id="KW-0808">Transferase</keyword>
<comment type="function">
    <text evidence="1">Catalyzes the reversible conversion of 3-phosphohydroxypyruvate to phosphoserine and of 3-hydroxy-2-oxo-4-phosphonooxybutanoate to phosphohydroxythreonine.</text>
</comment>
<comment type="catalytic activity">
    <reaction evidence="1">
        <text>O-phospho-L-serine + 2-oxoglutarate = 3-phosphooxypyruvate + L-glutamate</text>
        <dbReference type="Rhea" id="RHEA:14329"/>
        <dbReference type="ChEBI" id="CHEBI:16810"/>
        <dbReference type="ChEBI" id="CHEBI:18110"/>
        <dbReference type="ChEBI" id="CHEBI:29985"/>
        <dbReference type="ChEBI" id="CHEBI:57524"/>
        <dbReference type="EC" id="2.6.1.52"/>
    </reaction>
</comment>
<comment type="catalytic activity">
    <reaction evidence="1">
        <text>4-(phosphooxy)-L-threonine + 2-oxoglutarate = (R)-3-hydroxy-2-oxo-4-phosphooxybutanoate + L-glutamate</text>
        <dbReference type="Rhea" id="RHEA:16573"/>
        <dbReference type="ChEBI" id="CHEBI:16810"/>
        <dbReference type="ChEBI" id="CHEBI:29985"/>
        <dbReference type="ChEBI" id="CHEBI:58452"/>
        <dbReference type="ChEBI" id="CHEBI:58538"/>
        <dbReference type="EC" id="2.6.1.52"/>
    </reaction>
</comment>
<comment type="cofactor">
    <cofactor evidence="1">
        <name>pyridoxal 5'-phosphate</name>
        <dbReference type="ChEBI" id="CHEBI:597326"/>
    </cofactor>
    <text evidence="1">Binds 1 pyridoxal phosphate per subunit.</text>
</comment>
<comment type="pathway">
    <text evidence="1">Amino-acid biosynthesis; L-serine biosynthesis; L-serine from 3-phospho-D-glycerate: step 2/3.</text>
</comment>
<comment type="pathway">
    <text evidence="1">Cofactor biosynthesis; pyridoxine 5'-phosphate biosynthesis; pyridoxine 5'-phosphate from D-erythrose 4-phosphate: step 3/5.</text>
</comment>
<comment type="subunit">
    <text evidence="1">Homodimer.</text>
</comment>
<comment type="subcellular location">
    <subcellularLocation>
        <location evidence="1">Cytoplasm</location>
    </subcellularLocation>
</comment>
<comment type="similarity">
    <text evidence="1">Belongs to the class-V pyridoxal-phosphate-dependent aminotransferase family. SerC subfamily.</text>
</comment>
<name>SERC_XANC8</name>
<proteinExistence type="inferred from homology"/>
<feature type="chain" id="PRO_1000076911" description="Phosphoserine aminotransferase">
    <location>
        <begin position="1"/>
        <end position="361"/>
    </location>
</feature>
<feature type="binding site" evidence="1">
    <location>
        <position position="42"/>
    </location>
    <ligand>
        <name>L-glutamate</name>
        <dbReference type="ChEBI" id="CHEBI:29985"/>
    </ligand>
</feature>
<feature type="binding site" evidence="1">
    <location>
        <begin position="76"/>
        <end position="77"/>
    </location>
    <ligand>
        <name>pyridoxal 5'-phosphate</name>
        <dbReference type="ChEBI" id="CHEBI:597326"/>
    </ligand>
</feature>
<feature type="binding site" evidence="1">
    <location>
        <position position="102"/>
    </location>
    <ligand>
        <name>pyridoxal 5'-phosphate</name>
        <dbReference type="ChEBI" id="CHEBI:597326"/>
    </ligand>
</feature>
<feature type="binding site" evidence="1">
    <location>
        <position position="152"/>
    </location>
    <ligand>
        <name>pyridoxal 5'-phosphate</name>
        <dbReference type="ChEBI" id="CHEBI:597326"/>
    </ligand>
</feature>
<feature type="binding site" evidence="1">
    <location>
        <position position="172"/>
    </location>
    <ligand>
        <name>pyridoxal 5'-phosphate</name>
        <dbReference type="ChEBI" id="CHEBI:597326"/>
    </ligand>
</feature>
<feature type="binding site" evidence="1">
    <location>
        <position position="195"/>
    </location>
    <ligand>
        <name>pyridoxal 5'-phosphate</name>
        <dbReference type="ChEBI" id="CHEBI:597326"/>
    </ligand>
</feature>
<feature type="binding site" evidence="1">
    <location>
        <begin position="237"/>
        <end position="238"/>
    </location>
    <ligand>
        <name>pyridoxal 5'-phosphate</name>
        <dbReference type="ChEBI" id="CHEBI:597326"/>
    </ligand>
</feature>
<feature type="modified residue" description="N6-(pyridoxal phosphate)lysine" evidence="1">
    <location>
        <position position="196"/>
    </location>
</feature>
<reference key="1">
    <citation type="journal article" date="2005" name="Genome Res.">
        <title>Comparative and functional genomic analyses of the pathogenicity of phytopathogen Xanthomonas campestris pv. campestris.</title>
        <authorList>
            <person name="Qian W."/>
            <person name="Jia Y."/>
            <person name="Ren S.-X."/>
            <person name="He Y.-Q."/>
            <person name="Feng J.-X."/>
            <person name="Lu L.-F."/>
            <person name="Sun Q."/>
            <person name="Ying G."/>
            <person name="Tang D.-J."/>
            <person name="Tang H."/>
            <person name="Wu W."/>
            <person name="Hao P."/>
            <person name="Wang L."/>
            <person name="Jiang B.-L."/>
            <person name="Zeng S."/>
            <person name="Gu W.-Y."/>
            <person name="Lu G."/>
            <person name="Rong L."/>
            <person name="Tian Y."/>
            <person name="Yao Z."/>
            <person name="Fu G."/>
            <person name="Chen B."/>
            <person name="Fang R."/>
            <person name="Qiang B."/>
            <person name="Chen Z."/>
            <person name="Zhao G.-P."/>
            <person name="Tang J.-L."/>
            <person name="He C."/>
        </authorList>
    </citation>
    <scope>NUCLEOTIDE SEQUENCE [LARGE SCALE GENOMIC DNA]</scope>
    <source>
        <strain>8004</strain>
    </source>
</reference>
<protein>
    <recommendedName>
        <fullName evidence="1">Phosphoserine aminotransferase</fullName>
        <ecNumber evidence="1">2.6.1.52</ecNumber>
    </recommendedName>
    <alternativeName>
        <fullName evidence="1">Phosphohydroxythreonine aminotransferase</fullName>
        <shortName evidence="1">PSAT</shortName>
    </alternativeName>
</protein>
<sequence length="361" mass="38759">MTRAFNFSAGPATLPESVLRQAQEEMVEWNGVGASIVEISHRSADFMAVAAAAEADLRTLLSIPDDYAVLFTSGGATTIQALLPLNFAAPGQAVDYVVSGHWGKTAIKQATPYVDVRVAADGQPGGYVDIPPVASWTLSPHAAYVHITANETIHGVEFRDTPDVGTLPLFADFSSSIASEPLDIRRYGLIYAGAQKNLGPVGISVVIVRRELLERAGQPRADIFNYASHVARDSMLNTPPTWNWYLLGLTVKWMLEQGGVAAFAQRNAEKAALVYGAIDGSGGFYRNQVMPTVRSRMNIPFFLGDEQLDALFVSESKAAGLLALKGHKAVGGIRASLYNAMPVAGAQALVAFMHDFQQRHG</sequence>
<accession>Q4UTC9</accession>
<gene>
    <name evidence="1" type="primary">serC</name>
    <name type="ordered locus">XC_2645</name>
</gene>
<organism>
    <name type="scientific">Xanthomonas campestris pv. campestris (strain 8004)</name>
    <dbReference type="NCBI Taxonomy" id="314565"/>
    <lineage>
        <taxon>Bacteria</taxon>
        <taxon>Pseudomonadati</taxon>
        <taxon>Pseudomonadota</taxon>
        <taxon>Gammaproteobacteria</taxon>
        <taxon>Lysobacterales</taxon>
        <taxon>Lysobacteraceae</taxon>
        <taxon>Xanthomonas</taxon>
    </lineage>
</organism>
<evidence type="ECO:0000255" key="1">
    <source>
        <dbReference type="HAMAP-Rule" id="MF_00160"/>
    </source>
</evidence>